<reference key="1">
    <citation type="journal article" date="2001" name="Lancet">
        <title>Whole genome sequencing of meticillin-resistant Staphylococcus aureus.</title>
        <authorList>
            <person name="Kuroda M."/>
            <person name="Ohta T."/>
            <person name="Uchiyama I."/>
            <person name="Baba T."/>
            <person name="Yuzawa H."/>
            <person name="Kobayashi I."/>
            <person name="Cui L."/>
            <person name="Oguchi A."/>
            <person name="Aoki K."/>
            <person name="Nagai Y."/>
            <person name="Lian J.-Q."/>
            <person name="Ito T."/>
            <person name="Kanamori M."/>
            <person name="Matsumaru H."/>
            <person name="Maruyama A."/>
            <person name="Murakami H."/>
            <person name="Hosoyama A."/>
            <person name="Mizutani-Ui Y."/>
            <person name="Takahashi N.K."/>
            <person name="Sawano T."/>
            <person name="Inoue R."/>
            <person name="Kaito C."/>
            <person name="Sekimizu K."/>
            <person name="Hirakawa H."/>
            <person name="Kuhara S."/>
            <person name="Goto S."/>
            <person name="Yabuzaki J."/>
            <person name="Kanehisa M."/>
            <person name="Yamashita A."/>
            <person name="Oshima K."/>
            <person name="Furuya K."/>
            <person name="Yoshino C."/>
            <person name="Shiba T."/>
            <person name="Hattori M."/>
            <person name="Ogasawara N."/>
            <person name="Hayashi H."/>
            <person name="Hiramatsu K."/>
        </authorList>
    </citation>
    <scope>NUCLEOTIDE SEQUENCE [LARGE SCALE GENOMIC DNA]</scope>
    <source>
        <strain>Mu50 / ATCC 700699</strain>
    </source>
</reference>
<name>Y1055_STAAM</name>
<sequence length="156" mass="18268">MSRKTYEKIANINGMFNMLEQQIIHSQDMAHFRSEFFYVNHEHRENYEALLIYYKNSIDNPIVDGACYILALPEIFNSVDVFESELPFSWVYDENGITETMKSLSIPLQYLVAAALEVTDVNIFKPSGFTMGMNNWNIAQMRIFWQYTAIIRKEAL</sequence>
<proteinExistence type="predicted"/>
<organism>
    <name type="scientific">Staphylococcus aureus (strain Mu50 / ATCC 700699)</name>
    <dbReference type="NCBI Taxonomy" id="158878"/>
    <lineage>
        <taxon>Bacteria</taxon>
        <taxon>Bacillati</taxon>
        <taxon>Bacillota</taxon>
        <taxon>Bacilli</taxon>
        <taxon>Bacillales</taxon>
        <taxon>Staphylococcaceae</taxon>
        <taxon>Staphylococcus</taxon>
    </lineage>
</organism>
<gene>
    <name type="ordered locus">SAV1055</name>
</gene>
<protein>
    <recommendedName>
        <fullName>Uncharacterized protein SAV1055</fullName>
    </recommendedName>
</protein>
<feature type="chain" id="PRO_0000215528" description="Uncharacterized protein SAV1055">
    <location>
        <begin position="1"/>
        <end position="156"/>
    </location>
</feature>
<dbReference type="EMBL" id="BA000017">
    <property type="protein sequence ID" value="BAB57217.1"/>
    <property type="molecule type" value="Genomic_DNA"/>
</dbReference>
<dbReference type="RefSeq" id="WP_000088431.1">
    <property type="nucleotide sequence ID" value="NC_002758.2"/>
</dbReference>
<dbReference type="SMR" id="P0A0Q1"/>
<dbReference type="KEGG" id="sav:SAV1055"/>
<dbReference type="HOGENOM" id="CLU_1685497_0_0_9"/>
<dbReference type="Proteomes" id="UP000002481">
    <property type="component" value="Chromosome"/>
</dbReference>
<dbReference type="InterPro" id="IPR024469">
    <property type="entry name" value="DUF2538"/>
</dbReference>
<dbReference type="Pfam" id="PF10804">
    <property type="entry name" value="DUF2538"/>
    <property type="match status" value="1"/>
</dbReference>
<accession>P0A0Q1</accession>
<accession>P52079</accession>